<feature type="chain" id="PRO_1000214660" description="Large ribosomal subunit protein bL25">
    <location>
        <begin position="1"/>
        <end position="94"/>
    </location>
</feature>
<comment type="function">
    <text evidence="1">This is one of the proteins that binds to the 5S RNA in the ribosome where it forms part of the central protuberance.</text>
</comment>
<comment type="subunit">
    <text evidence="1">Part of the 50S ribosomal subunit; part of the 5S rRNA/L5/L18/L25 subcomplex. Contacts the 5S rRNA. Binds to the 5S rRNA independently of L5 and L18.</text>
</comment>
<comment type="similarity">
    <text evidence="1">Belongs to the bacterial ribosomal protein bL25 family.</text>
</comment>
<accession>C4ZU30</accession>
<reference key="1">
    <citation type="journal article" date="2009" name="J. Bacteriol.">
        <title>Genomic sequencing reveals regulatory mutations and recombinational events in the widely used MC4100 lineage of Escherichia coli K-12.</title>
        <authorList>
            <person name="Ferenci T."/>
            <person name="Zhou Z."/>
            <person name="Betteridge T."/>
            <person name="Ren Y."/>
            <person name="Liu Y."/>
            <person name="Feng L."/>
            <person name="Reeves P.R."/>
            <person name="Wang L."/>
        </authorList>
    </citation>
    <scope>NUCLEOTIDE SEQUENCE [LARGE SCALE GENOMIC DNA]</scope>
    <source>
        <strain>K12 / MC4100 / BW2952</strain>
    </source>
</reference>
<dbReference type="EMBL" id="CP001396">
    <property type="protein sequence ID" value="ACR61862.1"/>
    <property type="molecule type" value="Genomic_DNA"/>
</dbReference>
<dbReference type="RefSeq" id="WP_000494183.1">
    <property type="nucleotide sequence ID" value="NC_012759.1"/>
</dbReference>
<dbReference type="SMR" id="C4ZU30"/>
<dbReference type="GeneID" id="93774996"/>
<dbReference type="KEGG" id="ebw:BWG_1961"/>
<dbReference type="HOGENOM" id="CLU_137946_0_0_6"/>
<dbReference type="GO" id="GO:0022625">
    <property type="term" value="C:cytosolic large ribosomal subunit"/>
    <property type="evidence" value="ECO:0007669"/>
    <property type="project" value="TreeGrafter"/>
</dbReference>
<dbReference type="GO" id="GO:0008097">
    <property type="term" value="F:5S rRNA binding"/>
    <property type="evidence" value="ECO:0007669"/>
    <property type="project" value="InterPro"/>
</dbReference>
<dbReference type="GO" id="GO:0003735">
    <property type="term" value="F:structural constituent of ribosome"/>
    <property type="evidence" value="ECO:0007669"/>
    <property type="project" value="InterPro"/>
</dbReference>
<dbReference type="GO" id="GO:0006412">
    <property type="term" value="P:translation"/>
    <property type="evidence" value="ECO:0007669"/>
    <property type="project" value="UniProtKB-UniRule"/>
</dbReference>
<dbReference type="CDD" id="cd00495">
    <property type="entry name" value="Ribosomal_L25_TL5_CTC"/>
    <property type="match status" value="1"/>
</dbReference>
<dbReference type="FunFam" id="2.40.240.10:FF:000002">
    <property type="entry name" value="50S ribosomal protein L25"/>
    <property type="match status" value="1"/>
</dbReference>
<dbReference type="Gene3D" id="2.40.240.10">
    <property type="entry name" value="Ribosomal Protein L25, Chain P"/>
    <property type="match status" value="1"/>
</dbReference>
<dbReference type="HAMAP" id="MF_01336">
    <property type="entry name" value="Ribosomal_bL25"/>
    <property type="match status" value="1"/>
</dbReference>
<dbReference type="InterPro" id="IPR020056">
    <property type="entry name" value="Rbsml_bL25/Gln-tRNA_synth_N"/>
</dbReference>
<dbReference type="InterPro" id="IPR011035">
    <property type="entry name" value="Ribosomal_bL25/Gln-tRNA_synth"/>
</dbReference>
<dbReference type="InterPro" id="IPR020055">
    <property type="entry name" value="Ribosomal_bL25_short"/>
</dbReference>
<dbReference type="InterPro" id="IPR029751">
    <property type="entry name" value="Ribosomal_L25_dom"/>
</dbReference>
<dbReference type="InterPro" id="IPR020930">
    <property type="entry name" value="Ribosomal_uL5_bac-type"/>
</dbReference>
<dbReference type="NCBIfam" id="NF004612">
    <property type="entry name" value="PRK05943.1"/>
    <property type="match status" value="1"/>
</dbReference>
<dbReference type="PANTHER" id="PTHR33284">
    <property type="entry name" value="RIBOSOMAL PROTEIN L25/GLN-TRNA SYNTHETASE, ANTI-CODON-BINDING DOMAIN-CONTAINING PROTEIN"/>
    <property type="match status" value="1"/>
</dbReference>
<dbReference type="PANTHER" id="PTHR33284:SF1">
    <property type="entry name" value="RIBOSOMAL PROTEIN L25_GLN-TRNA SYNTHETASE, ANTI-CODON-BINDING DOMAIN-CONTAINING PROTEIN"/>
    <property type="match status" value="1"/>
</dbReference>
<dbReference type="Pfam" id="PF01386">
    <property type="entry name" value="Ribosomal_L25p"/>
    <property type="match status" value="1"/>
</dbReference>
<dbReference type="SUPFAM" id="SSF50715">
    <property type="entry name" value="Ribosomal protein L25-like"/>
    <property type="match status" value="1"/>
</dbReference>
<gene>
    <name evidence="1" type="primary">rplY</name>
    <name type="ordered locus">BWG_1961</name>
</gene>
<name>RL25_ECOBW</name>
<keyword id="KW-0687">Ribonucleoprotein</keyword>
<keyword id="KW-0689">Ribosomal protein</keyword>
<keyword id="KW-0694">RNA-binding</keyword>
<keyword id="KW-0699">rRNA-binding</keyword>
<evidence type="ECO:0000255" key="1">
    <source>
        <dbReference type="HAMAP-Rule" id="MF_01336"/>
    </source>
</evidence>
<evidence type="ECO:0000305" key="2"/>
<sequence length="94" mass="10693">MFTINAEVRKEQGKGASRRLRAANKFPAIIYGGKEAPLAIELDHDKVMNMQAKAEFYSEVLTIVVDGKEIKVKAQDVQRHPYKPKLQHIDFVRA</sequence>
<proteinExistence type="inferred from homology"/>
<protein>
    <recommendedName>
        <fullName evidence="1">Large ribosomal subunit protein bL25</fullName>
    </recommendedName>
    <alternativeName>
        <fullName evidence="2">50S ribosomal protein L25</fullName>
    </alternativeName>
</protein>
<organism>
    <name type="scientific">Escherichia coli (strain K12 / MC4100 / BW2952)</name>
    <dbReference type="NCBI Taxonomy" id="595496"/>
    <lineage>
        <taxon>Bacteria</taxon>
        <taxon>Pseudomonadati</taxon>
        <taxon>Pseudomonadota</taxon>
        <taxon>Gammaproteobacteria</taxon>
        <taxon>Enterobacterales</taxon>
        <taxon>Enterobacteriaceae</taxon>
        <taxon>Escherichia</taxon>
    </lineage>
</organism>